<reference key="1">
    <citation type="submission" date="2007-07" db="EMBL/GenBank/DDBJ databases">
        <title>Genome sequence of Campylobacter curvus 525.92 isolated from human feces.</title>
        <authorList>
            <person name="Fouts D.E."/>
            <person name="Mongodin E.F."/>
            <person name="Puiu D."/>
            <person name="Sebastian Y."/>
            <person name="Miller W.G."/>
            <person name="Mandrell R.E."/>
            <person name="Lastovica A.J."/>
            <person name="Nelson K.E."/>
        </authorList>
    </citation>
    <scope>NUCLEOTIDE SEQUENCE [LARGE SCALE GENOMIC DNA]</scope>
    <source>
        <strain>525.92</strain>
    </source>
</reference>
<keyword id="KW-0067">ATP-binding</keyword>
<keyword id="KW-0418">Kinase</keyword>
<keyword id="KW-0545">Nucleotide biosynthesis</keyword>
<keyword id="KW-0547">Nucleotide-binding</keyword>
<keyword id="KW-1185">Reference proteome</keyword>
<keyword id="KW-0808">Transferase</keyword>
<comment type="function">
    <text evidence="1">Phosphorylation of dTMP to form dTDP in both de novo and salvage pathways of dTTP synthesis.</text>
</comment>
<comment type="catalytic activity">
    <reaction evidence="1">
        <text>dTMP + ATP = dTDP + ADP</text>
        <dbReference type="Rhea" id="RHEA:13517"/>
        <dbReference type="ChEBI" id="CHEBI:30616"/>
        <dbReference type="ChEBI" id="CHEBI:58369"/>
        <dbReference type="ChEBI" id="CHEBI:63528"/>
        <dbReference type="ChEBI" id="CHEBI:456216"/>
        <dbReference type="EC" id="2.7.4.9"/>
    </reaction>
</comment>
<comment type="similarity">
    <text evidence="1">Belongs to the thymidylate kinase family.</text>
</comment>
<gene>
    <name evidence="1" type="primary">tmk</name>
    <name type="ordered locus">Ccur92_09580</name>
    <name type="ORF">CCV52592_1098</name>
</gene>
<sequence length="194" mass="21702">MYVLFEGVDGVGKSTQIEMIARAHEDSLVTKEPGGTKIGQKLREILLGGDFKLSARAEILLFLADRAEHYQKMIKPNSSRLILSDRGFVSGVAYALANDASLKIDDLLWLNSFALEGKFADKIVFFEASETLIKKRLSSRGLIDAIEARGLKYLLKVQECMKEVLKAHKFNVLYIDASEDIATINAKIENFIKF</sequence>
<accession>A7GYH0</accession>
<dbReference type="EC" id="2.7.4.9" evidence="1"/>
<dbReference type="EMBL" id="CP000767">
    <property type="protein sequence ID" value="EAU00131.1"/>
    <property type="molecule type" value="Genomic_DNA"/>
</dbReference>
<dbReference type="RefSeq" id="WP_009650446.1">
    <property type="nucleotide sequence ID" value="NC_009715.2"/>
</dbReference>
<dbReference type="SMR" id="A7GYH0"/>
<dbReference type="STRING" id="360105.CCV52592_1098"/>
<dbReference type="KEGG" id="ccv:CCV52592_1098"/>
<dbReference type="HOGENOM" id="CLU_049131_0_0_7"/>
<dbReference type="OrthoDB" id="9774907at2"/>
<dbReference type="Proteomes" id="UP000006380">
    <property type="component" value="Chromosome"/>
</dbReference>
<dbReference type="GO" id="GO:0005829">
    <property type="term" value="C:cytosol"/>
    <property type="evidence" value="ECO:0007669"/>
    <property type="project" value="TreeGrafter"/>
</dbReference>
<dbReference type="GO" id="GO:0005524">
    <property type="term" value="F:ATP binding"/>
    <property type="evidence" value="ECO:0007669"/>
    <property type="project" value="UniProtKB-UniRule"/>
</dbReference>
<dbReference type="GO" id="GO:0004798">
    <property type="term" value="F:dTMP kinase activity"/>
    <property type="evidence" value="ECO:0007669"/>
    <property type="project" value="UniProtKB-UniRule"/>
</dbReference>
<dbReference type="GO" id="GO:0006233">
    <property type="term" value="P:dTDP biosynthetic process"/>
    <property type="evidence" value="ECO:0007669"/>
    <property type="project" value="InterPro"/>
</dbReference>
<dbReference type="GO" id="GO:0006235">
    <property type="term" value="P:dTTP biosynthetic process"/>
    <property type="evidence" value="ECO:0007669"/>
    <property type="project" value="UniProtKB-UniRule"/>
</dbReference>
<dbReference type="GO" id="GO:0006227">
    <property type="term" value="P:dUDP biosynthetic process"/>
    <property type="evidence" value="ECO:0007669"/>
    <property type="project" value="TreeGrafter"/>
</dbReference>
<dbReference type="CDD" id="cd01672">
    <property type="entry name" value="TMPK"/>
    <property type="match status" value="1"/>
</dbReference>
<dbReference type="Gene3D" id="3.40.50.300">
    <property type="entry name" value="P-loop containing nucleotide triphosphate hydrolases"/>
    <property type="match status" value="1"/>
</dbReference>
<dbReference type="HAMAP" id="MF_00165">
    <property type="entry name" value="Thymidylate_kinase"/>
    <property type="match status" value="1"/>
</dbReference>
<dbReference type="InterPro" id="IPR027417">
    <property type="entry name" value="P-loop_NTPase"/>
</dbReference>
<dbReference type="InterPro" id="IPR039430">
    <property type="entry name" value="Thymidylate_kin-like_dom"/>
</dbReference>
<dbReference type="InterPro" id="IPR018094">
    <property type="entry name" value="Thymidylate_kinase"/>
</dbReference>
<dbReference type="NCBIfam" id="TIGR00041">
    <property type="entry name" value="DTMP_kinase"/>
    <property type="match status" value="1"/>
</dbReference>
<dbReference type="PANTHER" id="PTHR10344">
    <property type="entry name" value="THYMIDYLATE KINASE"/>
    <property type="match status" value="1"/>
</dbReference>
<dbReference type="PANTHER" id="PTHR10344:SF4">
    <property type="entry name" value="UMP-CMP KINASE 2, MITOCHONDRIAL"/>
    <property type="match status" value="1"/>
</dbReference>
<dbReference type="Pfam" id="PF02223">
    <property type="entry name" value="Thymidylate_kin"/>
    <property type="match status" value="1"/>
</dbReference>
<dbReference type="SUPFAM" id="SSF52540">
    <property type="entry name" value="P-loop containing nucleoside triphosphate hydrolases"/>
    <property type="match status" value="1"/>
</dbReference>
<name>KTHY_CAMC5</name>
<proteinExistence type="inferred from homology"/>
<protein>
    <recommendedName>
        <fullName evidence="1">Thymidylate kinase</fullName>
        <ecNumber evidence="1">2.7.4.9</ecNumber>
    </recommendedName>
    <alternativeName>
        <fullName evidence="1">dTMP kinase</fullName>
    </alternativeName>
</protein>
<evidence type="ECO:0000255" key="1">
    <source>
        <dbReference type="HAMAP-Rule" id="MF_00165"/>
    </source>
</evidence>
<organism>
    <name type="scientific">Campylobacter curvus (strain 525.92)</name>
    <dbReference type="NCBI Taxonomy" id="360105"/>
    <lineage>
        <taxon>Bacteria</taxon>
        <taxon>Pseudomonadati</taxon>
        <taxon>Campylobacterota</taxon>
        <taxon>Epsilonproteobacteria</taxon>
        <taxon>Campylobacterales</taxon>
        <taxon>Campylobacteraceae</taxon>
        <taxon>Campylobacter</taxon>
    </lineage>
</organism>
<feature type="chain" id="PRO_1000123563" description="Thymidylate kinase">
    <location>
        <begin position="1"/>
        <end position="194"/>
    </location>
</feature>
<feature type="binding site" evidence="1">
    <location>
        <begin position="7"/>
        <end position="14"/>
    </location>
    <ligand>
        <name>ATP</name>
        <dbReference type="ChEBI" id="CHEBI:30616"/>
    </ligand>
</feature>